<keyword id="KW-0997">Cell inner membrane</keyword>
<keyword id="KW-1003">Cell membrane</keyword>
<keyword id="KW-0472">Membrane</keyword>
<keyword id="KW-0812">Transmembrane</keyword>
<keyword id="KW-1133">Transmembrane helix</keyword>
<feature type="chain" id="PRO_0000343825" description="UPF0056 inner membrane protein MarC">
    <location>
        <begin position="1"/>
        <end position="221"/>
    </location>
</feature>
<feature type="topological domain" description="Periplasmic" evidence="2">
    <location>
        <begin position="1"/>
        <end position="7"/>
    </location>
</feature>
<feature type="transmembrane region" description="Helical" evidence="2">
    <location>
        <begin position="8"/>
        <end position="28"/>
    </location>
</feature>
<feature type="topological domain" description="Cytoplasmic" evidence="2">
    <location>
        <begin position="29"/>
        <end position="45"/>
    </location>
</feature>
<feature type="transmembrane region" description="Helical" evidence="2">
    <location>
        <begin position="46"/>
        <end position="66"/>
    </location>
</feature>
<feature type="topological domain" description="Periplasmic" evidence="2">
    <location>
        <begin position="67"/>
        <end position="68"/>
    </location>
</feature>
<feature type="transmembrane region" description="Helical" evidence="2">
    <location>
        <begin position="69"/>
        <end position="89"/>
    </location>
</feature>
<feature type="topological domain" description="Cytoplasmic" evidence="2">
    <location>
        <begin position="90"/>
        <end position="118"/>
    </location>
</feature>
<feature type="transmembrane region" description="Helical" evidence="2">
    <location>
        <begin position="119"/>
        <end position="139"/>
    </location>
</feature>
<feature type="topological domain" description="Periplasmic" evidence="2">
    <location>
        <begin position="140"/>
        <end position="154"/>
    </location>
</feature>
<feature type="transmembrane region" description="Helical" evidence="2">
    <location>
        <begin position="155"/>
        <end position="175"/>
    </location>
</feature>
<feature type="topological domain" description="Cytoplasmic" evidence="2">
    <location>
        <begin position="176"/>
        <end position="196"/>
    </location>
</feature>
<feature type="transmembrane region" description="Helical" evidence="2">
    <location>
        <begin position="197"/>
        <end position="217"/>
    </location>
</feature>
<feature type="topological domain" description="Periplasmic" evidence="2">
    <location>
        <begin position="218"/>
        <end position="221"/>
    </location>
</feature>
<reference key="1">
    <citation type="submission" date="2007-11" db="EMBL/GenBank/DDBJ databases">
        <authorList>
            <consortium name="The Salmonella enterica serovar Paratyphi B Genome Sequencing Project"/>
            <person name="McClelland M."/>
            <person name="Sanderson E.K."/>
            <person name="Porwollik S."/>
            <person name="Spieth J."/>
            <person name="Clifton W.S."/>
            <person name="Fulton R."/>
            <person name="Cordes M."/>
            <person name="Wollam A."/>
            <person name="Shah N."/>
            <person name="Pepin K."/>
            <person name="Bhonagiri V."/>
            <person name="Nash W."/>
            <person name="Johnson M."/>
            <person name="Thiruvilangam P."/>
            <person name="Wilson R."/>
        </authorList>
    </citation>
    <scope>NUCLEOTIDE SEQUENCE [LARGE SCALE GENOMIC DNA]</scope>
    <source>
        <strain>ATCC BAA-1250 / SPB7</strain>
    </source>
</reference>
<evidence type="ECO:0000250" key="1"/>
<evidence type="ECO:0000255" key="2"/>
<evidence type="ECO:0000305" key="3"/>
<organism>
    <name type="scientific">Salmonella paratyphi B (strain ATCC BAA-1250 / SPB7)</name>
    <dbReference type="NCBI Taxonomy" id="1016998"/>
    <lineage>
        <taxon>Bacteria</taxon>
        <taxon>Pseudomonadati</taxon>
        <taxon>Pseudomonadota</taxon>
        <taxon>Gammaproteobacteria</taxon>
        <taxon>Enterobacterales</taxon>
        <taxon>Enterobacteriaceae</taxon>
        <taxon>Salmonella</taxon>
    </lineage>
</organism>
<name>MARC_SALPB</name>
<gene>
    <name type="primary">marC</name>
    <name type="ordered locus">SPAB_01783</name>
</gene>
<sequence>MMDLFKAIGLGLVVLLPLANPLTTVALFLGLAGNMNSAERNRQSYMASVYVFAIMMVAYYAGQLVMNTFGISIPGLRIAGGLIVAFIGFRMLFPQQKAHESPEAKSKSEELADEPTANIAFVPLAMPSTAGPGTIAMIISSASTVRHGGEFPDWVIMVAPPIIFLAVAVILWGCLRSSGAIMRLVGKGGIEAISRLMGFLLVCMGVQFIINGVLEIIKTYH</sequence>
<protein>
    <recommendedName>
        <fullName>UPF0056 inner membrane protein MarC</fullName>
    </recommendedName>
</protein>
<accession>A9MYZ8</accession>
<comment type="subcellular location">
    <subcellularLocation>
        <location evidence="1">Cell inner membrane</location>
        <topology evidence="1">Multi-pass membrane protein</topology>
    </subcellularLocation>
</comment>
<comment type="similarity">
    <text evidence="3">Belongs to the UPF0056 (MarC) family.</text>
</comment>
<dbReference type="EMBL" id="CP000886">
    <property type="protein sequence ID" value="ABX67176.1"/>
    <property type="molecule type" value="Genomic_DNA"/>
</dbReference>
<dbReference type="RefSeq" id="WP_000968968.1">
    <property type="nucleotide sequence ID" value="NC_010102.1"/>
</dbReference>
<dbReference type="KEGG" id="spq:SPAB_01783"/>
<dbReference type="PATRIC" id="fig|1016998.12.peg.1679"/>
<dbReference type="HOGENOM" id="CLU_079909_2_0_6"/>
<dbReference type="BioCyc" id="SENT1016998:SPAB_RS07230-MONOMER"/>
<dbReference type="Proteomes" id="UP000008556">
    <property type="component" value="Chromosome"/>
</dbReference>
<dbReference type="GO" id="GO:0005886">
    <property type="term" value="C:plasma membrane"/>
    <property type="evidence" value="ECO:0007669"/>
    <property type="project" value="UniProtKB-SubCell"/>
</dbReference>
<dbReference type="InterPro" id="IPR002771">
    <property type="entry name" value="Multi_antbiot-R_MarC"/>
</dbReference>
<dbReference type="NCBIfam" id="TIGR00427">
    <property type="entry name" value="NAAT family transporter"/>
    <property type="match status" value="1"/>
</dbReference>
<dbReference type="NCBIfam" id="NF008228">
    <property type="entry name" value="PRK10995.1"/>
    <property type="match status" value="1"/>
</dbReference>
<dbReference type="PANTHER" id="PTHR33508:SF2">
    <property type="entry name" value="UPF0056 INNER MEMBRANE PROTEIN MARC"/>
    <property type="match status" value="1"/>
</dbReference>
<dbReference type="PANTHER" id="PTHR33508">
    <property type="entry name" value="UPF0056 MEMBRANE PROTEIN YHCE"/>
    <property type="match status" value="1"/>
</dbReference>
<dbReference type="Pfam" id="PF01914">
    <property type="entry name" value="MarC"/>
    <property type="match status" value="1"/>
</dbReference>
<proteinExistence type="inferred from homology"/>